<comment type="function">
    <text evidence="1">DNA-dependent RNA polymerase catalyzes the transcription of DNA into RNA using the four ribonucleoside triphosphates as substrates.</text>
</comment>
<comment type="catalytic activity">
    <reaction evidence="1">
        <text>RNA(n) + a ribonucleoside 5'-triphosphate = RNA(n+1) + diphosphate</text>
        <dbReference type="Rhea" id="RHEA:21248"/>
        <dbReference type="Rhea" id="RHEA-COMP:14527"/>
        <dbReference type="Rhea" id="RHEA-COMP:17342"/>
        <dbReference type="ChEBI" id="CHEBI:33019"/>
        <dbReference type="ChEBI" id="CHEBI:61557"/>
        <dbReference type="ChEBI" id="CHEBI:140395"/>
        <dbReference type="EC" id="2.7.7.6"/>
    </reaction>
</comment>
<comment type="cofactor">
    <cofactor evidence="1">
        <name>Mg(2+)</name>
        <dbReference type="ChEBI" id="CHEBI:18420"/>
    </cofactor>
    <text evidence="1">Binds 1 Mg(2+) ion per subunit.</text>
</comment>
<comment type="cofactor">
    <cofactor evidence="1">
        <name>Zn(2+)</name>
        <dbReference type="ChEBI" id="CHEBI:29105"/>
    </cofactor>
    <text evidence="1">Binds 2 Zn(2+) ions per subunit.</text>
</comment>
<comment type="subunit">
    <text evidence="1">The RNAP catalytic core consists of 2 alpha, 1 beta, 1 beta' and 1 omega subunit. When a sigma factor is associated with the core the holoenzyme is formed, which can initiate transcription.</text>
</comment>
<comment type="similarity">
    <text evidence="1">Belongs to the RNA polymerase beta' chain family.</text>
</comment>
<accession>Q2NZX9</accession>
<feature type="chain" id="PRO_0000240830" description="DNA-directed RNA polymerase subunit beta'">
    <location>
        <begin position="1"/>
        <end position="1405"/>
    </location>
</feature>
<feature type="region of interest" description="Disordered" evidence="2">
    <location>
        <begin position="1375"/>
        <end position="1405"/>
    </location>
</feature>
<feature type="binding site" evidence="1">
    <location>
        <position position="70"/>
    </location>
    <ligand>
        <name>Zn(2+)</name>
        <dbReference type="ChEBI" id="CHEBI:29105"/>
        <label>1</label>
    </ligand>
</feature>
<feature type="binding site" evidence="1">
    <location>
        <position position="72"/>
    </location>
    <ligand>
        <name>Zn(2+)</name>
        <dbReference type="ChEBI" id="CHEBI:29105"/>
        <label>1</label>
    </ligand>
</feature>
<feature type="binding site" evidence="1">
    <location>
        <position position="85"/>
    </location>
    <ligand>
        <name>Zn(2+)</name>
        <dbReference type="ChEBI" id="CHEBI:29105"/>
        <label>1</label>
    </ligand>
</feature>
<feature type="binding site" evidence="1">
    <location>
        <position position="88"/>
    </location>
    <ligand>
        <name>Zn(2+)</name>
        <dbReference type="ChEBI" id="CHEBI:29105"/>
        <label>1</label>
    </ligand>
</feature>
<feature type="binding site" evidence="1">
    <location>
        <position position="460"/>
    </location>
    <ligand>
        <name>Mg(2+)</name>
        <dbReference type="ChEBI" id="CHEBI:18420"/>
    </ligand>
</feature>
<feature type="binding site" evidence="1">
    <location>
        <position position="462"/>
    </location>
    <ligand>
        <name>Mg(2+)</name>
        <dbReference type="ChEBI" id="CHEBI:18420"/>
    </ligand>
</feature>
<feature type="binding site" evidence="1">
    <location>
        <position position="464"/>
    </location>
    <ligand>
        <name>Mg(2+)</name>
        <dbReference type="ChEBI" id="CHEBI:18420"/>
    </ligand>
</feature>
<feature type="binding site" evidence="1">
    <location>
        <position position="815"/>
    </location>
    <ligand>
        <name>Zn(2+)</name>
        <dbReference type="ChEBI" id="CHEBI:29105"/>
        <label>2</label>
    </ligand>
</feature>
<feature type="binding site" evidence="1">
    <location>
        <position position="890"/>
    </location>
    <ligand>
        <name>Zn(2+)</name>
        <dbReference type="ChEBI" id="CHEBI:29105"/>
        <label>2</label>
    </ligand>
</feature>
<feature type="binding site" evidence="1">
    <location>
        <position position="897"/>
    </location>
    <ligand>
        <name>Zn(2+)</name>
        <dbReference type="ChEBI" id="CHEBI:29105"/>
        <label>2</label>
    </ligand>
</feature>
<feature type="binding site" evidence="1">
    <location>
        <position position="900"/>
    </location>
    <ligand>
        <name>Zn(2+)</name>
        <dbReference type="ChEBI" id="CHEBI:29105"/>
        <label>2</label>
    </ligand>
</feature>
<protein>
    <recommendedName>
        <fullName evidence="1">DNA-directed RNA polymerase subunit beta'</fullName>
        <shortName evidence="1">RNAP subunit beta'</shortName>
        <ecNumber evidence="1">2.7.7.6</ecNumber>
    </recommendedName>
    <alternativeName>
        <fullName evidence="1">RNA polymerase subunit beta'</fullName>
    </alternativeName>
    <alternativeName>
        <fullName evidence="1">Transcriptase subunit beta'</fullName>
    </alternativeName>
</protein>
<sequence>MKDLLNLFNQQRQTLDFDAIKIALASPDLIRSWSYGEVKKPETINYRTFKPERDGLFCAAIFGPIKDYECLCGKYKRMKHRGVVCEKCGTEVTLAKVRRERMGHIDLASPVAHIWFLKSLPSRIGLMLDMTLRDIERVLYFEAYVVTEPGLTPLERRQLLTEEQYLTARQEYNDDFDAAMGAEAVYELLRTIDLQSEMTRLREEIASTGSETKLKRLTKRIKLIEAFLESGNRPEWMVMTVLPVLPPDLRPLVPLDGGRFATSDLNDLYRRVINRNNRLRRLLELNAPDIIVRNEKRMLQESVDALLDNGRRGRAITGTNKRPLKSLADMIKGKQGRFRQNLLGKRVDYSGRSVITVGPYLKLHQCGLPKKMALELFKPFVFAKLQRRGLATTIKAAKKLVEREEAEVWDILEEVIREHPVLLNRAPTLHRLGIQAFEPVLIEGKAIQLHPLVCTAFNADFDGDQMAVHVPLSLEAQLEARALMMSTNNILSPANGEPIIVPSQDVVLGLYYMSRALENKKGEGMVFANTSEVKRAYDNRVVELHAKVKVRITQVDVDAVDGKRTSGTSIVDTTVGRALLSEILPEGLPFQLANTEMTKKNISRLINSSYRLLGLKDTVVFADKLMYTGYAYATRAGVSIGIDDMLIPDEKKGILTEAEAEVLEIQEQYQSGLVTAGERYNKVVDIWSRTSERIAKAMMDTIGTEKVENAKGETIDQKSMNSLYIMADSGARGSQAQIRQLAGMRGLMARPDGSIIETPIKANFREGLNVQEYFNSTHGARKGLADTALKTANSGYLTRRLVDVAQDVVITEIDCGTTEGLIMTPIVEGGDVVEPLKERVLGRVVAEDVYLPGNDEEPIVTRNTLLDEAWVAKLEDASVQSVKVRSTISCESSFGVCARCYGRDLARGHQVNIGEAVGVIAAQSIGEPGTQLTMRTFHIGGAASRAAAVDNITVKTTGSVKFNNLKSVAHASGSLVAVSRSGELSVLDGHGRERERYKLPYGATITAKDGDAVKAGQSVANWDPHNHPIVSEVAGFIRFIDFVDGVTVIEKTDELTGLASREITDPKRRGAHAKELRPIVRIVDGKGNDLTIPNTDLPAQYLLPPRSIVNLQDGAAVGVGDVVAKIPQEASKTRDITGGLPRVADLFEARKPKDPAILAERSGIISFGKDTKGKQRLIIKDTDGSEHEELIPKYRQIIVFEGEHVTKGETVVDGEPSPQDILRLLGVEPLAAYLVKEIQDVYRLQGVKINDKHIEVITRQMLRKVEIVDQGNSKFLNGEQVERQRVIEENARLVKRNELPAKYDPVLLGITKASLATESFISAASFQETTRVLTEAAVRGTRDNLRGLKENVIVGRLIPAGTGLAYHAGRRKASGLTDSEMETLSGKPAGAEPVAALADAGADEE</sequence>
<dbReference type="EC" id="2.7.7.6" evidence="1"/>
<dbReference type="EMBL" id="AP008229">
    <property type="protein sequence ID" value="BAE70148.1"/>
    <property type="molecule type" value="Genomic_DNA"/>
</dbReference>
<dbReference type="RefSeq" id="WP_011260033.1">
    <property type="nucleotide sequence ID" value="NC_007705.1"/>
</dbReference>
<dbReference type="SMR" id="Q2NZX9"/>
<dbReference type="KEGG" id="xom:XOO3393"/>
<dbReference type="HOGENOM" id="CLU_000524_3_1_6"/>
<dbReference type="GO" id="GO:0000428">
    <property type="term" value="C:DNA-directed RNA polymerase complex"/>
    <property type="evidence" value="ECO:0007669"/>
    <property type="project" value="UniProtKB-KW"/>
</dbReference>
<dbReference type="GO" id="GO:0003677">
    <property type="term" value="F:DNA binding"/>
    <property type="evidence" value="ECO:0007669"/>
    <property type="project" value="UniProtKB-UniRule"/>
</dbReference>
<dbReference type="GO" id="GO:0003899">
    <property type="term" value="F:DNA-directed RNA polymerase activity"/>
    <property type="evidence" value="ECO:0007669"/>
    <property type="project" value="UniProtKB-UniRule"/>
</dbReference>
<dbReference type="GO" id="GO:0000287">
    <property type="term" value="F:magnesium ion binding"/>
    <property type="evidence" value="ECO:0007669"/>
    <property type="project" value="UniProtKB-UniRule"/>
</dbReference>
<dbReference type="GO" id="GO:0008270">
    <property type="term" value="F:zinc ion binding"/>
    <property type="evidence" value="ECO:0007669"/>
    <property type="project" value="UniProtKB-UniRule"/>
</dbReference>
<dbReference type="GO" id="GO:0006351">
    <property type="term" value="P:DNA-templated transcription"/>
    <property type="evidence" value="ECO:0007669"/>
    <property type="project" value="UniProtKB-UniRule"/>
</dbReference>
<dbReference type="CDD" id="cd02655">
    <property type="entry name" value="RNAP_beta'_C"/>
    <property type="match status" value="1"/>
</dbReference>
<dbReference type="CDD" id="cd01609">
    <property type="entry name" value="RNAP_beta'_N"/>
    <property type="match status" value="1"/>
</dbReference>
<dbReference type="FunFam" id="1.10.132.30:FF:000003">
    <property type="entry name" value="DNA-directed RNA polymerase subunit beta"/>
    <property type="match status" value="1"/>
</dbReference>
<dbReference type="FunFam" id="1.10.150.390:FF:000002">
    <property type="entry name" value="DNA-directed RNA polymerase subunit beta"/>
    <property type="match status" value="1"/>
</dbReference>
<dbReference type="Gene3D" id="1.10.132.30">
    <property type="match status" value="1"/>
</dbReference>
<dbReference type="Gene3D" id="1.10.150.390">
    <property type="match status" value="1"/>
</dbReference>
<dbReference type="Gene3D" id="1.10.1790.20">
    <property type="match status" value="1"/>
</dbReference>
<dbReference type="Gene3D" id="1.10.40.90">
    <property type="match status" value="1"/>
</dbReference>
<dbReference type="Gene3D" id="2.40.40.20">
    <property type="match status" value="1"/>
</dbReference>
<dbReference type="Gene3D" id="2.40.50.100">
    <property type="match status" value="3"/>
</dbReference>
<dbReference type="Gene3D" id="4.10.860.120">
    <property type="entry name" value="RNA polymerase II, clamp domain"/>
    <property type="match status" value="1"/>
</dbReference>
<dbReference type="Gene3D" id="1.10.274.100">
    <property type="entry name" value="RNA polymerase Rpb1, domain 3"/>
    <property type="match status" value="1"/>
</dbReference>
<dbReference type="HAMAP" id="MF_01322">
    <property type="entry name" value="RNApol_bact_RpoC"/>
    <property type="match status" value="1"/>
</dbReference>
<dbReference type="InterPro" id="IPR045867">
    <property type="entry name" value="DNA-dir_RpoC_beta_prime"/>
</dbReference>
<dbReference type="InterPro" id="IPR012754">
    <property type="entry name" value="DNA-dir_RpoC_beta_prime_bact"/>
</dbReference>
<dbReference type="InterPro" id="IPR000722">
    <property type="entry name" value="RNA_pol_asu"/>
</dbReference>
<dbReference type="InterPro" id="IPR006592">
    <property type="entry name" value="RNA_pol_N"/>
</dbReference>
<dbReference type="InterPro" id="IPR007080">
    <property type="entry name" value="RNA_pol_Rpb1_1"/>
</dbReference>
<dbReference type="InterPro" id="IPR007066">
    <property type="entry name" value="RNA_pol_Rpb1_3"/>
</dbReference>
<dbReference type="InterPro" id="IPR042102">
    <property type="entry name" value="RNA_pol_Rpb1_3_sf"/>
</dbReference>
<dbReference type="InterPro" id="IPR007083">
    <property type="entry name" value="RNA_pol_Rpb1_4"/>
</dbReference>
<dbReference type="InterPro" id="IPR007081">
    <property type="entry name" value="RNA_pol_Rpb1_5"/>
</dbReference>
<dbReference type="InterPro" id="IPR044893">
    <property type="entry name" value="RNA_pol_Rpb1_clamp_domain"/>
</dbReference>
<dbReference type="InterPro" id="IPR038120">
    <property type="entry name" value="Rpb1_funnel_sf"/>
</dbReference>
<dbReference type="NCBIfam" id="TIGR02386">
    <property type="entry name" value="rpoC_TIGR"/>
    <property type="match status" value="1"/>
</dbReference>
<dbReference type="PANTHER" id="PTHR19376">
    <property type="entry name" value="DNA-DIRECTED RNA POLYMERASE"/>
    <property type="match status" value="1"/>
</dbReference>
<dbReference type="PANTHER" id="PTHR19376:SF54">
    <property type="entry name" value="DNA-DIRECTED RNA POLYMERASE SUBUNIT BETA"/>
    <property type="match status" value="1"/>
</dbReference>
<dbReference type="Pfam" id="PF04997">
    <property type="entry name" value="RNA_pol_Rpb1_1"/>
    <property type="match status" value="1"/>
</dbReference>
<dbReference type="Pfam" id="PF00623">
    <property type="entry name" value="RNA_pol_Rpb1_2"/>
    <property type="match status" value="2"/>
</dbReference>
<dbReference type="Pfam" id="PF04983">
    <property type="entry name" value="RNA_pol_Rpb1_3"/>
    <property type="match status" value="1"/>
</dbReference>
<dbReference type="Pfam" id="PF05000">
    <property type="entry name" value="RNA_pol_Rpb1_4"/>
    <property type="match status" value="1"/>
</dbReference>
<dbReference type="Pfam" id="PF04998">
    <property type="entry name" value="RNA_pol_Rpb1_5"/>
    <property type="match status" value="1"/>
</dbReference>
<dbReference type="SMART" id="SM00663">
    <property type="entry name" value="RPOLA_N"/>
    <property type="match status" value="1"/>
</dbReference>
<dbReference type="SUPFAM" id="SSF64484">
    <property type="entry name" value="beta and beta-prime subunits of DNA dependent RNA-polymerase"/>
    <property type="match status" value="1"/>
</dbReference>
<evidence type="ECO:0000255" key="1">
    <source>
        <dbReference type="HAMAP-Rule" id="MF_01322"/>
    </source>
</evidence>
<evidence type="ECO:0000256" key="2">
    <source>
        <dbReference type="SAM" id="MobiDB-lite"/>
    </source>
</evidence>
<keyword id="KW-0240">DNA-directed RNA polymerase</keyword>
<keyword id="KW-0460">Magnesium</keyword>
<keyword id="KW-0479">Metal-binding</keyword>
<keyword id="KW-0548">Nucleotidyltransferase</keyword>
<keyword id="KW-0804">Transcription</keyword>
<keyword id="KW-0808">Transferase</keyword>
<keyword id="KW-0862">Zinc</keyword>
<organism>
    <name type="scientific">Xanthomonas oryzae pv. oryzae (strain MAFF 311018)</name>
    <dbReference type="NCBI Taxonomy" id="342109"/>
    <lineage>
        <taxon>Bacteria</taxon>
        <taxon>Pseudomonadati</taxon>
        <taxon>Pseudomonadota</taxon>
        <taxon>Gammaproteobacteria</taxon>
        <taxon>Lysobacterales</taxon>
        <taxon>Lysobacteraceae</taxon>
        <taxon>Xanthomonas</taxon>
    </lineage>
</organism>
<name>RPOC_XANOM</name>
<proteinExistence type="inferred from homology"/>
<gene>
    <name evidence="1" type="primary">rpoC</name>
    <name type="ordered locus">XOO3393</name>
</gene>
<reference key="1">
    <citation type="journal article" date="2005" name="Jpn. Agric. Res. Q.">
        <title>Genome sequence of Xanthomonas oryzae pv. oryzae suggests contribution of large numbers of effector genes and insertion sequences to its race diversity.</title>
        <authorList>
            <person name="Ochiai H."/>
            <person name="Inoue Y."/>
            <person name="Takeya M."/>
            <person name="Sasaki A."/>
            <person name="Kaku H."/>
        </authorList>
    </citation>
    <scope>NUCLEOTIDE SEQUENCE [LARGE SCALE GENOMIC DNA]</scope>
    <source>
        <strain>MAFF 311018</strain>
    </source>
</reference>